<feature type="chain" id="PRO_0000189939" description="Phosphate acyltransferase">
    <location>
        <begin position="1"/>
        <end position="328"/>
    </location>
</feature>
<dbReference type="EC" id="2.3.1.274" evidence="1"/>
<dbReference type="EMBL" id="BX571857">
    <property type="protein sequence ID" value="CAG42940.1"/>
    <property type="molecule type" value="Genomic_DNA"/>
</dbReference>
<dbReference type="RefSeq" id="WP_000239748.1">
    <property type="nucleotide sequence ID" value="NC_002953.3"/>
</dbReference>
<dbReference type="SMR" id="Q6G9Y4"/>
<dbReference type="KEGG" id="sas:SAS1163"/>
<dbReference type="HOGENOM" id="CLU_039379_1_1_9"/>
<dbReference type="UniPathway" id="UPA00085"/>
<dbReference type="GO" id="GO:0005737">
    <property type="term" value="C:cytoplasm"/>
    <property type="evidence" value="ECO:0007669"/>
    <property type="project" value="UniProtKB-SubCell"/>
</dbReference>
<dbReference type="GO" id="GO:0043811">
    <property type="term" value="F:phosphate:acyl-[acyl carrier protein] acyltransferase activity"/>
    <property type="evidence" value="ECO:0007669"/>
    <property type="project" value="UniProtKB-UniRule"/>
</dbReference>
<dbReference type="GO" id="GO:0006633">
    <property type="term" value="P:fatty acid biosynthetic process"/>
    <property type="evidence" value="ECO:0007669"/>
    <property type="project" value="UniProtKB-UniRule"/>
</dbReference>
<dbReference type="GO" id="GO:0008654">
    <property type="term" value="P:phospholipid biosynthetic process"/>
    <property type="evidence" value="ECO:0007669"/>
    <property type="project" value="UniProtKB-KW"/>
</dbReference>
<dbReference type="Gene3D" id="3.40.718.10">
    <property type="entry name" value="Isopropylmalate Dehydrogenase"/>
    <property type="match status" value="1"/>
</dbReference>
<dbReference type="HAMAP" id="MF_00019">
    <property type="entry name" value="PlsX"/>
    <property type="match status" value="1"/>
</dbReference>
<dbReference type="InterPro" id="IPR003664">
    <property type="entry name" value="FA_synthesis"/>
</dbReference>
<dbReference type="InterPro" id="IPR012281">
    <property type="entry name" value="Phospholipid_synth_PlsX-like"/>
</dbReference>
<dbReference type="NCBIfam" id="TIGR00182">
    <property type="entry name" value="plsX"/>
    <property type="match status" value="1"/>
</dbReference>
<dbReference type="PANTHER" id="PTHR30100">
    <property type="entry name" value="FATTY ACID/PHOSPHOLIPID SYNTHESIS PROTEIN PLSX"/>
    <property type="match status" value="1"/>
</dbReference>
<dbReference type="PANTHER" id="PTHR30100:SF1">
    <property type="entry name" value="PHOSPHATE ACYLTRANSFERASE"/>
    <property type="match status" value="1"/>
</dbReference>
<dbReference type="Pfam" id="PF02504">
    <property type="entry name" value="FA_synthesis"/>
    <property type="match status" value="1"/>
</dbReference>
<dbReference type="PIRSF" id="PIRSF002465">
    <property type="entry name" value="Phsphlp_syn_PlsX"/>
    <property type="match status" value="1"/>
</dbReference>
<dbReference type="SUPFAM" id="SSF53659">
    <property type="entry name" value="Isocitrate/Isopropylmalate dehydrogenase-like"/>
    <property type="match status" value="1"/>
</dbReference>
<accession>Q6G9Y4</accession>
<comment type="function">
    <text evidence="1">Catalyzes the reversible formation of acyl-phosphate (acyl-PO(4)) from acyl-[acyl-carrier-protein] (acyl-ACP). This enzyme utilizes acyl-ACP as fatty acyl donor, but not acyl-CoA.</text>
</comment>
<comment type="catalytic activity">
    <reaction evidence="1">
        <text>a fatty acyl-[ACP] + phosphate = an acyl phosphate + holo-[ACP]</text>
        <dbReference type="Rhea" id="RHEA:42292"/>
        <dbReference type="Rhea" id="RHEA-COMP:9685"/>
        <dbReference type="Rhea" id="RHEA-COMP:14125"/>
        <dbReference type="ChEBI" id="CHEBI:43474"/>
        <dbReference type="ChEBI" id="CHEBI:59918"/>
        <dbReference type="ChEBI" id="CHEBI:64479"/>
        <dbReference type="ChEBI" id="CHEBI:138651"/>
        <dbReference type="EC" id="2.3.1.274"/>
    </reaction>
</comment>
<comment type="pathway">
    <text evidence="1">Lipid metabolism; phospholipid metabolism.</text>
</comment>
<comment type="subunit">
    <text evidence="1">Homodimer. Probably interacts with PlsY.</text>
</comment>
<comment type="subcellular location">
    <subcellularLocation>
        <location evidence="1">Cytoplasm</location>
    </subcellularLocation>
    <text evidence="1">Associated with the membrane possibly through PlsY.</text>
</comment>
<comment type="similarity">
    <text evidence="1">Belongs to the PlsX family.</text>
</comment>
<sequence length="328" mass="35422">MVKLAIDMMGGDNAPDIVLEAVQKAVEDFKDLEIILFGDEKKYNLNHERIEFRHCSEKIEMEDEPVRAIKRKKDSSMVKMAEAVKSGEADGCVSAGNTGALMSAGLFIVGRIKGVARPALVVTLPTIDGKGFVFLDVGANADAKPEHLLQYAQLGDIYAQKIRGIDNPKISLLNIGTEPAKGNSLTKKSYELLNQDHSLNFVGNIEAKTLMDGDTDVVVTDGYTGNMVLKNLEGTAKSIGKMLKDTIMSSTKNKLAGAILKKDLAEFAKKMDYSEYGGSVLLGLEGTVVKAHGSSNAKAFYSAIRQAKIAGEQNIVQTMKETVGESNE</sequence>
<protein>
    <recommendedName>
        <fullName evidence="1">Phosphate acyltransferase</fullName>
        <ecNumber evidence="1">2.3.1.274</ecNumber>
    </recommendedName>
    <alternativeName>
        <fullName evidence="1">Acyl-ACP phosphotransacylase</fullName>
    </alternativeName>
    <alternativeName>
        <fullName evidence="1">Acyl-[acyl-carrier-protein]--phosphate acyltransferase</fullName>
    </alternativeName>
    <alternativeName>
        <fullName evidence="1">Phosphate-acyl-ACP acyltransferase</fullName>
    </alternativeName>
</protein>
<gene>
    <name evidence="1" type="primary">plsX</name>
    <name type="ordered locus">SAS1163</name>
</gene>
<name>PLSX_STAAS</name>
<evidence type="ECO:0000255" key="1">
    <source>
        <dbReference type="HAMAP-Rule" id="MF_00019"/>
    </source>
</evidence>
<proteinExistence type="inferred from homology"/>
<organism>
    <name type="scientific">Staphylococcus aureus (strain MSSA476)</name>
    <dbReference type="NCBI Taxonomy" id="282459"/>
    <lineage>
        <taxon>Bacteria</taxon>
        <taxon>Bacillati</taxon>
        <taxon>Bacillota</taxon>
        <taxon>Bacilli</taxon>
        <taxon>Bacillales</taxon>
        <taxon>Staphylococcaceae</taxon>
        <taxon>Staphylococcus</taxon>
    </lineage>
</organism>
<reference key="1">
    <citation type="journal article" date="2004" name="Proc. Natl. Acad. Sci. U.S.A.">
        <title>Complete genomes of two clinical Staphylococcus aureus strains: evidence for the rapid evolution of virulence and drug resistance.</title>
        <authorList>
            <person name="Holden M.T.G."/>
            <person name="Feil E.J."/>
            <person name="Lindsay J.A."/>
            <person name="Peacock S.J."/>
            <person name="Day N.P.J."/>
            <person name="Enright M.C."/>
            <person name="Foster T.J."/>
            <person name="Moore C.E."/>
            <person name="Hurst L."/>
            <person name="Atkin R."/>
            <person name="Barron A."/>
            <person name="Bason N."/>
            <person name="Bentley S.D."/>
            <person name="Chillingworth C."/>
            <person name="Chillingworth T."/>
            <person name="Churcher C."/>
            <person name="Clark L."/>
            <person name="Corton C."/>
            <person name="Cronin A."/>
            <person name="Doggett J."/>
            <person name="Dowd L."/>
            <person name="Feltwell T."/>
            <person name="Hance Z."/>
            <person name="Harris B."/>
            <person name="Hauser H."/>
            <person name="Holroyd S."/>
            <person name="Jagels K."/>
            <person name="James K.D."/>
            <person name="Lennard N."/>
            <person name="Line A."/>
            <person name="Mayes R."/>
            <person name="Moule S."/>
            <person name="Mungall K."/>
            <person name="Ormond D."/>
            <person name="Quail M.A."/>
            <person name="Rabbinowitsch E."/>
            <person name="Rutherford K.M."/>
            <person name="Sanders M."/>
            <person name="Sharp S."/>
            <person name="Simmonds M."/>
            <person name="Stevens K."/>
            <person name="Whitehead S."/>
            <person name="Barrell B.G."/>
            <person name="Spratt B.G."/>
            <person name="Parkhill J."/>
        </authorList>
    </citation>
    <scope>NUCLEOTIDE SEQUENCE [LARGE SCALE GENOMIC DNA]</scope>
    <source>
        <strain>MSSA476</strain>
    </source>
</reference>
<keyword id="KW-0963">Cytoplasm</keyword>
<keyword id="KW-0444">Lipid biosynthesis</keyword>
<keyword id="KW-0443">Lipid metabolism</keyword>
<keyword id="KW-0594">Phospholipid biosynthesis</keyword>
<keyword id="KW-1208">Phospholipid metabolism</keyword>
<keyword id="KW-0808">Transferase</keyword>